<protein>
    <recommendedName>
        <fullName>Putative uncharacterized protein YJL215C</fullName>
    </recommendedName>
</protein>
<feature type="chain" id="PRO_0000203012" description="Putative uncharacterized protein YJL215C">
    <location>
        <begin position="1"/>
        <end position="119"/>
    </location>
</feature>
<name>YJV5_YEAST</name>
<comment type="caution">
    <text evidence="1">Product of a dubious gene prediction unlikely to encode a functional protein. Because of that it is not part of the S.cerevisiae S288c complete/reference proteome set.</text>
</comment>
<evidence type="ECO:0000305" key="1">
    <source>
    </source>
</evidence>
<dbReference type="EMBL" id="Z34098">
    <property type="protein sequence ID" value="CAA83996.1"/>
    <property type="molecule type" value="Genomic_DNA"/>
</dbReference>
<dbReference type="EMBL" id="Z49490">
    <property type="protein sequence ID" value="CAA89512.1"/>
    <property type="molecule type" value="Genomic_DNA"/>
</dbReference>
<dbReference type="PIR" id="S50770">
    <property type="entry name" value="S50770"/>
</dbReference>
<dbReference type="DIP" id="DIP-4107N"/>
<dbReference type="PaxDb" id="4932-YJL215C"/>
<dbReference type="EnsemblFungi" id="YJL215C_mRNA">
    <property type="protein sequence ID" value="YJL215C"/>
    <property type="gene ID" value="YJL215C"/>
</dbReference>
<dbReference type="AGR" id="SGD:S000003751"/>
<dbReference type="SGD" id="S000003751">
    <property type="gene designation" value="YJL215C"/>
</dbReference>
<dbReference type="HOGENOM" id="CLU_2063325_0_0_1"/>
<organism>
    <name type="scientific">Saccharomyces cerevisiae (strain ATCC 204508 / S288c)</name>
    <name type="common">Baker's yeast</name>
    <dbReference type="NCBI Taxonomy" id="559292"/>
    <lineage>
        <taxon>Eukaryota</taxon>
        <taxon>Fungi</taxon>
        <taxon>Dikarya</taxon>
        <taxon>Ascomycota</taxon>
        <taxon>Saccharomycotina</taxon>
        <taxon>Saccharomycetes</taxon>
        <taxon>Saccharomycetales</taxon>
        <taxon>Saccharomycetaceae</taxon>
        <taxon>Saccharomyces</taxon>
    </lineage>
</organism>
<proteinExistence type="uncertain"/>
<gene>
    <name type="ordered locus">YJL215C</name>
    <name type="ORF">HRE119</name>
    <name type="ORF">J0231</name>
</gene>
<reference key="1">
    <citation type="journal article" date="1994" name="Yeast">
        <title>Sequence analysis of a 40.2 kb DNA fragment located near the left telomere of yeast chromosome X.</title>
        <authorList>
            <person name="Vandenbol M."/>
            <person name="Durand P."/>
            <person name="Bolle P.-A."/>
            <person name="Dion C."/>
            <person name="Portetelle D."/>
            <person name="Hilger F."/>
        </authorList>
    </citation>
    <scope>NUCLEOTIDE SEQUENCE [GENOMIC DNA]</scope>
    <source>
        <strain>ATCC 204508 / S288c</strain>
    </source>
</reference>
<reference key="2">
    <citation type="journal article" date="1996" name="EMBO J.">
        <title>Complete nucleotide sequence of Saccharomyces cerevisiae chromosome X.</title>
        <authorList>
            <person name="Galibert F."/>
            <person name="Alexandraki D."/>
            <person name="Baur A."/>
            <person name="Boles E."/>
            <person name="Chalwatzis N."/>
            <person name="Chuat J.-C."/>
            <person name="Coster F."/>
            <person name="Cziepluch C."/>
            <person name="de Haan M."/>
            <person name="Domdey H."/>
            <person name="Durand P."/>
            <person name="Entian K.-D."/>
            <person name="Gatius M."/>
            <person name="Goffeau A."/>
            <person name="Grivell L.A."/>
            <person name="Hennemann A."/>
            <person name="Herbert C.J."/>
            <person name="Heumann K."/>
            <person name="Hilger F."/>
            <person name="Hollenberg C.P."/>
            <person name="Huang M.-E."/>
            <person name="Jacq C."/>
            <person name="Jauniaux J.-C."/>
            <person name="Katsoulou C."/>
            <person name="Kirchrath L."/>
            <person name="Kleine K."/>
            <person name="Kordes E."/>
            <person name="Koetter P."/>
            <person name="Liebl S."/>
            <person name="Louis E.J."/>
            <person name="Manus V."/>
            <person name="Mewes H.-W."/>
            <person name="Miosga T."/>
            <person name="Obermaier B."/>
            <person name="Perea J."/>
            <person name="Pohl T.M."/>
            <person name="Portetelle D."/>
            <person name="Pujol A."/>
            <person name="Purnelle B."/>
            <person name="Ramezani Rad M."/>
            <person name="Rasmussen S.W."/>
            <person name="Rose M."/>
            <person name="Rossau R."/>
            <person name="Schaaff-Gerstenschlaeger I."/>
            <person name="Smits P.H.M."/>
            <person name="Scarcez T."/>
            <person name="Soriano N."/>
            <person name="To Van D."/>
            <person name="Tzermia M."/>
            <person name="Van Broekhoven A."/>
            <person name="Vandenbol M."/>
            <person name="Wedler H."/>
            <person name="von Wettstein D."/>
            <person name="Wambutt R."/>
            <person name="Zagulski M."/>
            <person name="Zollner A."/>
            <person name="Karpfinger-Hartl L."/>
        </authorList>
    </citation>
    <scope>NUCLEOTIDE SEQUENCE [LARGE SCALE GENOMIC DNA]</scope>
    <source>
        <strain>ATCC 204508 / S288c</strain>
    </source>
</reference>
<reference key="3">
    <citation type="journal article" date="2014" name="G3 (Bethesda)">
        <title>The reference genome sequence of Saccharomyces cerevisiae: Then and now.</title>
        <authorList>
            <person name="Engel S.R."/>
            <person name="Dietrich F.S."/>
            <person name="Fisk D.G."/>
            <person name="Binkley G."/>
            <person name="Balakrishnan R."/>
            <person name="Costanzo M.C."/>
            <person name="Dwight S.S."/>
            <person name="Hitz B.C."/>
            <person name="Karra K."/>
            <person name="Nash R.S."/>
            <person name="Weng S."/>
            <person name="Wong E.D."/>
            <person name="Lloyd P."/>
            <person name="Skrzypek M.S."/>
            <person name="Miyasato S.R."/>
            <person name="Simison M."/>
            <person name="Cherry J.M."/>
        </authorList>
    </citation>
    <scope>GENOME REANNOTATION</scope>
    <source>
        <strain>ATCC 204508 / S288c</strain>
    </source>
</reference>
<sequence length="119" mass="13857">MVSDDIPSSKRLRPCQFILFYLRVHVFHAKKRSEIPKLLRVQEQARSRNYSRDNSSRLAGRLNYTFQELSPAFSVRYVYKLLQQDALGCFLWNFSPSPHTSLLNPRGGDIIKLRESVNA</sequence>
<accession>P40895</accession>